<keyword id="KW-0224">Dipeptidase</keyword>
<keyword id="KW-0378">Hydrolase</keyword>
<keyword id="KW-0464">Manganese</keyword>
<keyword id="KW-0479">Metal-binding</keyword>
<keyword id="KW-0482">Metalloprotease</keyword>
<keyword id="KW-0645">Protease</keyword>
<name>PEPQ_XANAC</name>
<proteinExistence type="inferred from homology"/>
<comment type="function">
    <text evidence="1">Splits dipeptides with a prolyl residue in the C-terminal position.</text>
</comment>
<comment type="catalytic activity">
    <reaction evidence="1">
        <text>Xaa-L-Pro dipeptide + H2O = an L-alpha-amino acid + L-proline</text>
        <dbReference type="Rhea" id="RHEA:76407"/>
        <dbReference type="ChEBI" id="CHEBI:15377"/>
        <dbReference type="ChEBI" id="CHEBI:59869"/>
        <dbReference type="ChEBI" id="CHEBI:60039"/>
        <dbReference type="ChEBI" id="CHEBI:195196"/>
        <dbReference type="EC" id="3.4.13.9"/>
    </reaction>
</comment>
<comment type="cofactor">
    <cofactor evidence="1">
        <name>Mn(2+)</name>
        <dbReference type="ChEBI" id="CHEBI:29035"/>
    </cofactor>
    <text evidence="1">Binds 2 manganese ions per subunit.</text>
</comment>
<comment type="similarity">
    <text evidence="1">Belongs to the peptidase M24B family. Bacterial-type prolidase subfamily.</text>
</comment>
<gene>
    <name evidence="1" type="primary">pepQ</name>
    <name type="ordered locus">XAC3403</name>
</gene>
<accession>Q8PH57</accession>
<protein>
    <recommendedName>
        <fullName evidence="1">Xaa-Pro dipeptidase</fullName>
        <shortName evidence="1">X-Pro dipeptidase</shortName>
        <ecNumber evidence="1">3.4.13.9</ecNumber>
    </recommendedName>
    <alternativeName>
        <fullName evidence="1">Imidodipeptidase</fullName>
    </alternativeName>
    <alternativeName>
        <fullName evidence="1">Proline dipeptidase</fullName>
        <shortName evidence="1">Prolidase</shortName>
    </alternativeName>
</protein>
<sequence length="441" mass="48552">MPQPSLSSLYSDHLRTLTARADEALQRGGFEHLVVPSGSTHYQLFDDRDYPYAVNPQFKAWVPLTRVPDSWLVYTPGKRPTVIFYQPFDYWHVVPDAPSGWWVDHCDIHIIRTPDQALALLPKHAERCAILGEPHSTLGAYVPNNPQPVLDYLEYQRAFKTPYELALLRIAQQLAVRGHRAAEAAFRAGQSEFGIHMAYCAAVGQDANDLPYGNIIALNEHGAVLHYTELGQQPPQPLRSFLIDAGASAYGYASDITRTYAADPDSDFQALIDAVDAAQLRMGQNVRAGVDYKQLHIDAHLALMGILKEFGILTVSPEAALATGVSAAFFPHGLGHLIGLQVHDVAGFAASDRGGRIERPPGHPYLRLTRVLEPGMVVTIEPGVYFIDMLLDEVKKNGHAASVDWQRVEAFKPYGGIRIEDEVVCTDGSAENLTRPVFAAA</sequence>
<feature type="chain" id="PRO_0000303872" description="Xaa-Pro dipeptidase">
    <location>
        <begin position="1"/>
        <end position="441"/>
    </location>
</feature>
<feature type="binding site" evidence="1">
    <location>
        <position position="244"/>
    </location>
    <ligand>
        <name>Mn(2+)</name>
        <dbReference type="ChEBI" id="CHEBI:29035"/>
        <label>2</label>
    </ligand>
</feature>
<feature type="binding site" evidence="1">
    <location>
        <position position="255"/>
    </location>
    <ligand>
        <name>Mn(2+)</name>
        <dbReference type="ChEBI" id="CHEBI:29035"/>
        <label>1</label>
    </ligand>
</feature>
<feature type="binding site" evidence="1">
    <location>
        <position position="255"/>
    </location>
    <ligand>
        <name>Mn(2+)</name>
        <dbReference type="ChEBI" id="CHEBI:29035"/>
        <label>2</label>
    </ligand>
</feature>
<feature type="binding site" evidence="1">
    <location>
        <position position="336"/>
    </location>
    <ligand>
        <name>Mn(2+)</name>
        <dbReference type="ChEBI" id="CHEBI:29035"/>
        <label>1</label>
    </ligand>
</feature>
<feature type="binding site" evidence="1">
    <location>
        <position position="381"/>
    </location>
    <ligand>
        <name>Mn(2+)</name>
        <dbReference type="ChEBI" id="CHEBI:29035"/>
        <label>1</label>
    </ligand>
</feature>
<feature type="binding site" evidence="1">
    <location>
        <position position="420"/>
    </location>
    <ligand>
        <name>Mn(2+)</name>
        <dbReference type="ChEBI" id="CHEBI:29035"/>
        <label>1</label>
    </ligand>
</feature>
<feature type="binding site" evidence="1">
    <location>
        <position position="420"/>
    </location>
    <ligand>
        <name>Mn(2+)</name>
        <dbReference type="ChEBI" id="CHEBI:29035"/>
        <label>2</label>
    </ligand>
</feature>
<evidence type="ECO:0000255" key="1">
    <source>
        <dbReference type="HAMAP-Rule" id="MF_01279"/>
    </source>
</evidence>
<organism>
    <name type="scientific">Xanthomonas axonopodis pv. citri (strain 306)</name>
    <dbReference type="NCBI Taxonomy" id="190486"/>
    <lineage>
        <taxon>Bacteria</taxon>
        <taxon>Pseudomonadati</taxon>
        <taxon>Pseudomonadota</taxon>
        <taxon>Gammaproteobacteria</taxon>
        <taxon>Lysobacterales</taxon>
        <taxon>Lysobacteraceae</taxon>
        <taxon>Xanthomonas</taxon>
    </lineage>
</organism>
<reference key="1">
    <citation type="journal article" date="2002" name="Nature">
        <title>Comparison of the genomes of two Xanthomonas pathogens with differing host specificities.</title>
        <authorList>
            <person name="da Silva A.C.R."/>
            <person name="Ferro J.A."/>
            <person name="Reinach F.C."/>
            <person name="Farah C.S."/>
            <person name="Furlan L.R."/>
            <person name="Quaggio R.B."/>
            <person name="Monteiro-Vitorello C.B."/>
            <person name="Van Sluys M.A."/>
            <person name="Almeida N.F. Jr."/>
            <person name="Alves L.M.C."/>
            <person name="do Amaral A.M."/>
            <person name="Bertolini M.C."/>
            <person name="Camargo L.E.A."/>
            <person name="Camarotte G."/>
            <person name="Cannavan F."/>
            <person name="Cardozo J."/>
            <person name="Chambergo F."/>
            <person name="Ciapina L.P."/>
            <person name="Cicarelli R.M.B."/>
            <person name="Coutinho L.L."/>
            <person name="Cursino-Santos J.R."/>
            <person name="El-Dorry H."/>
            <person name="Faria J.B."/>
            <person name="Ferreira A.J.S."/>
            <person name="Ferreira R.C.C."/>
            <person name="Ferro M.I.T."/>
            <person name="Formighieri E.F."/>
            <person name="Franco M.C."/>
            <person name="Greggio C.C."/>
            <person name="Gruber A."/>
            <person name="Katsuyama A.M."/>
            <person name="Kishi L.T."/>
            <person name="Leite R.P."/>
            <person name="Lemos E.G.M."/>
            <person name="Lemos M.V.F."/>
            <person name="Locali E.C."/>
            <person name="Machado M.A."/>
            <person name="Madeira A.M.B.N."/>
            <person name="Martinez-Rossi N.M."/>
            <person name="Martins E.C."/>
            <person name="Meidanis J."/>
            <person name="Menck C.F.M."/>
            <person name="Miyaki C.Y."/>
            <person name="Moon D.H."/>
            <person name="Moreira L.M."/>
            <person name="Novo M.T.M."/>
            <person name="Okura V.K."/>
            <person name="Oliveira M.C."/>
            <person name="Oliveira V.R."/>
            <person name="Pereira H.A."/>
            <person name="Rossi A."/>
            <person name="Sena J.A.D."/>
            <person name="Silva C."/>
            <person name="de Souza R.F."/>
            <person name="Spinola L.A.F."/>
            <person name="Takita M.A."/>
            <person name="Tamura R.E."/>
            <person name="Teixeira E.C."/>
            <person name="Tezza R.I.D."/>
            <person name="Trindade dos Santos M."/>
            <person name="Truffi D."/>
            <person name="Tsai S.M."/>
            <person name="White F.F."/>
            <person name="Setubal J.C."/>
            <person name="Kitajima J.P."/>
        </authorList>
    </citation>
    <scope>NUCLEOTIDE SEQUENCE [LARGE SCALE GENOMIC DNA]</scope>
    <source>
        <strain>306</strain>
    </source>
</reference>
<dbReference type="EC" id="3.4.13.9" evidence="1"/>
<dbReference type="EMBL" id="AE008923">
    <property type="protein sequence ID" value="AAM38246.1"/>
    <property type="molecule type" value="Genomic_DNA"/>
</dbReference>
<dbReference type="RefSeq" id="WP_003486129.1">
    <property type="nucleotide sequence ID" value="NC_003919.1"/>
</dbReference>
<dbReference type="SMR" id="Q8PH57"/>
<dbReference type="MEROPS" id="M24.003"/>
<dbReference type="GeneID" id="66912450"/>
<dbReference type="KEGG" id="xac:XAC3403"/>
<dbReference type="eggNOG" id="COG0006">
    <property type="taxonomic scope" value="Bacteria"/>
</dbReference>
<dbReference type="HOGENOM" id="CLU_050675_0_0_6"/>
<dbReference type="Proteomes" id="UP000000576">
    <property type="component" value="Chromosome"/>
</dbReference>
<dbReference type="GO" id="GO:0005829">
    <property type="term" value="C:cytosol"/>
    <property type="evidence" value="ECO:0007669"/>
    <property type="project" value="TreeGrafter"/>
</dbReference>
<dbReference type="GO" id="GO:0004177">
    <property type="term" value="F:aminopeptidase activity"/>
    <property type="evidence" value="ECO:0007669"/>
    <property type="project" value="TreeGrafter"/>
</dbReference>
<dbReference type="GO" id="GO:0046872">
    <property type="term" value="F:metal ion binding"/>
    <property type="evidence" value="ECO:0007669"/>
    <property type="project" value="UniProtKB-KW"/>
</dbReference>
<dbReference type="GO" id="GO:0008235">
    <property type="term" value="F:metalloexopeptidase activity"/>
    <property type="evidence" value="ECO:0007669"/>
    <property type="project" value="UniProtKB-UniRule"/>
</dbReference>
<dbReference type="GO" id="GO:0016795">
    <property type="term" value="F:phosphoric triester hydrolase activity"/>
    <property type="evidence" value="ECO:0007669"/>
    <property type="project" value="InterPro"/>
</dbReference>
<dbReference type="GO" id="GO:0102009">
    <property type="term" value="F:proline dipeptidase activity"/>
    <property type="evidence" value="ECO:0007669"/>
    <property type="project" value="UniProtKB-EC"/>
</dbReference>
<dbReference type="GO" id="GO:0006508">
    <property type="term" value="P:proteolysis"/>
    <property type="evidence" value="ECO:0007669"/>
    <property type="project" value="UniProtKB-KW"/>
</dbReference>
<dbReference type="CDD" id="cd01087">
    <property type="entry name" value="Prolidase"/>
    <property type="match status" value="1"/>
</dbReference>
<dbReference type="Gene3D" id="3.90.230.10">
    <property type="entry name" value="Creatinase/methionine aminopeptidase superfamily"/>
    <property type="match status" value="1"/>
</dbReference>
<dbReference type="Gene3D" id="3.40.350.10">
    <property type="entry name" value="Creatinase/prolidase N-terminal domain"/>
    <property type="match status" value="1"/>
</dbReference>
<dbReference type="HAMAP" id="MF_01279">
    <property type="entry name" value="X_Pro_dipeptid"/>
    <property type="match status" value="1"/>
</dbReference>
<dbReference type="InterPro" id="IPR029149">
    <property type="entry name" value="Creatin/AminoP/Spt16_N"/>
</dbReference>
<dbReference type="InterPro" id="IPR036005">
    <property type="entry name" value="Creatinase/aminopeptidase-like"/>
</dbReference>
<dbReference type="InterPro" id="IPR048819">
    <property type="entry name" value="PepQ_N"/>
</dbReference>
<dbReference type="InterPro" id="IPR000994">
    <property type="entry name" value="Pept_M24"/>
</dbReference>
<dbReference type="InterPro" id="IPR001131">
    <property type="entry name" value="Peptidase_M24B_aminopep-P_CS"/>
</dbReference>
<dbReference type="InterPro" id="IPR052433">
    <property type="entry name" value="X-Pro_dipept-like"/>
</dbReference>
<dbReference type="InterPro" id="IPR022846">
    <property type="entry name" value="X_Pro_dipept"/>
</dbReference>
<dbReference type="NCBIfam" id="NF010133">
    <property type="entry name" value="PRK13607.1"/>
    <property type="match status" value="1"/>
</dbReference>
<dbReference type="PANTHER" id="PTHR43226">
    <property type="entry name" value="XAA-PRO AMINOPEPTIDASE 3"/>
    <property type="match status" value="1"/>
</dbReference>
<dbReference type="PANTHER" id="PTHR43226:SF8">
    <property type="entry name" value="XAA-PRO DIPEPTIDASE"/>
    <property type="match status" value="1"/>
</dbReference>
<dbReference type="Pfam" id="PF21216">
    <property type="entry name" value="PepQ_N"/>
    <property type="match status" value="1"/>
</dbReference>
<dbReference type="Pfam" id="PF00557">
    <property type="entry name" value="Peptidase_M24"/>
    <property type="match status" value="1"/>
</dbReference>
<dbReference type="SUPFAM" id="SSF55920">
    <property type="entry name" value="Creatinase/aminopeptidase"/>
    <property type="match status" value="1"/>
</dbReference>
<dbReference type="PROSITE" id="PS00491">
    <property type="entry name" value="PROLINE_PEPTIDASE"/>
    <property type="match status" value="1"/>
</dbReference>